<sequence length="279" mass="31506">MMTQMNYTGKVKRVAIIANGKYQSKRVASKLFSVFKDDPDFYLSKKNPDIVISIGGDGMLLSAFHMYEKELDKVRFVGIHTGHLGFYTDYRDFEVDKLIDNLRKDKGEQISYPILKVAITLDDGRVVKARALNEATVKRIEKTMVADVIINHVKFESFRGDGISVSTPTGSTAYNKSLGGAVLHPTIEALQLTEISSLNNRVFRTLGSSIIIPKKDKIELVPKRLGIYTISIDNKTYQLKNVTKVEYFIDDEKIHFVSSPSHTSFWKRVKDAFIGEIDS</sequence>
<evidence type="ECO:0000255" key="1">
    <source>
        <dbReference type="HAMAP-Rule" id="MF_00361"/>
    </source>
</evidence>
<proteinExistence type="inferred from homology"/>
<gene>
    <name evidence="1" type="primary">nadK</name>
    <name type="ordered locus">M28_Spy0824</name>
</gene>
<reference key="1">
    <citation type="journal article" date="2005" name="J. Infect. Dis.">
        <title>Genome sequence of a serotype M28 strain of group A Streptococcus: potential new insights into puerperal sepsis and bacterial disease specificity.</title>
        <authorList>
            <person name="Green N.M."/>
            <person name="Zhang S."/>
            <person name="Porcella S.F."/>
            <person name="Nagiec M.J."/>
            <person name="Barbian K.D."/>
            <person name="Beres S.B."/>
            <person name="Lefebvre R.B."/>
            <person name="Musser J.M."/>
        </authorList>
    </citation>
    <scope>NUCLEOTIDE SEQUENCE [LARGE SCALE GENOMIC DNA]</scope>
    <source>
        <strain>MGAS6180</strain>
    </source>
</reference>
<accession>Q48TM3</accession>
<keyword id="KW-0067">ATP-binding</keyword>
<keyword id="KW-0963">Cytoplasm</keyword>
<keyword id="KW-0418">Kinase</keyword>
<keyword id="KW-0520">NAD</keyword>
<keyword id="KW-0521">NADP</keyword>
<keyword id="KW-0547">Nucleotide-binding</keyword>
<keyword id="KW-0808">Transferase</keyword>
<dbReference type="EC" id="2.7.1.23" evidence="1"/>
<dbReference type="EMBL" id="CP000056">
    <property type="protein sequence ID" value="AAX71937.1"/>
    <property type="molecule type" value="Genomic_DNA"/>
</dbReference>
<dbReference type="RefSeq" id="WP_021340931.1">
    <property type="nucleotide sequence ID" value="NC_007296.2"/>
</dbReference>
<dbReference type="SMR" id="Q48TM3"/>
<dbReference type="KEGG" id="spb:M28_Spy0824"/>
<dbReference type="HOGENOM" id="CLU_008831_0_3_9"/>
<dbReference type="GO" id="GO:0005737">
    <property type="term" value="C:cytoplasm"/>
    <property type="evidence" value="ECO:0007669"/>
    <property type="project" value="UniProtKB-SubCell"/>
</dbReference>
<dbReference type="GO" id="GO:0005524">
    <property type="term" value="F:ATP binding"/>
    <property type="evidence" value="ECO:0007669"/>
    <property type="project" value="UniProtKB-KW"/>
</dbReference>
<dbReference type="GO" id="GO:0046872">
    <property type="term" value="F:metal ion binding"/>
    <property type="evidence" value="ECO:0007669"/>
    <property type="project" value="UniProtKB-UniRule"/>
</dbReference>
<dbReference type="GO" id="GO:0051287">
    <property type="term" value="F:NAD binding"/>
    <property type="evidence" value="ECO:0007669"/>
    <property type="project" value="UniProtKB-ARBA"/>
</dbReference>
<dbReference type="GO" id="GO:0003951">
    <property type="term" value="F:NAD+ kinase activity"/>
    <property type="evidence" value="ECO:0007669"/>
    <property type="project" value="UniProtKB-UniRule"/>
</dbReference>
<dbReference type="GO" id="GO:0019674">
    <property type="term" value="P:NAD metabolic process"/>
    <property type="evidence" value="ECO:0007669"/>
    <property type="project" value="InterPro"/>
</dbReference>
<dbReference type="GO" id="GO:0006741">
    <property type="term" value="P:NADP biosynthetic process"/>
    <property type="evidence" value="ECO:0007669"/>
    <property type="project" value="UniProtKB-UniRule"/>
</dbReference>
<dbReference type="Gene3D" id="3.40.50.10330">
    <property type="entry name" value="Probable inorganic polyphosphate/atp-NAD kinase, domain 1"/>
    <property type="match status" value="1"/>
</dbReference>
<dbReference type="Gene3D" id="2.60.200.30">
    <property type="entry name" value="Probable inorganic polyphosphate/atp-NAD kinase, domain 2"/>
    <property type="match status" value="1"/>
</dbReference>
<dbReference type="HAMAP" id="MF_00361">
    <property type="entry name" value="NAD_kinase"/>
    <property type="match status" value="1"/>
</dbReference>
<dbReference type="InterPro" id="IPR017438">
    <property type="entry name" value="ATP-NAD_kinase_N"/>
</dbReference>
<dbReference type="InterPro" id="IPR017437">
    <property type="entry name" value="ATP-NAD_kinase_PpnK-typ_C"/>
</dbReference>
<dbReference type="InterPro" id="IPR016064">
    <property type="entry name" value="NAD/diacylglycerol_kinase_sf"/>
</dbReference>
<dbReference type="InterPro" id="IPR002504">
    <property type="entry name" value="NADK"/>
</dbReference>
<dbReference type="NCBIfam" id="NF003424">
    <property type="entry name" value="PRK04885.1"/>
    <property type="match status" value="1"/>
</dbReference>
<dbReference type="PANTHER" id="PTHR20275">
    <property type="entry name" value="NAD KINASE"/>
    <property type="match status" value="1"/>
</dbReference>
<dbReference type="PANTHER" id="PTHR20275:SF0">
    <property type="entry name" value="NAD KINASE"/>
    <property type="match status" value="1"/>
</dbReference>
<dbReference type="Pfam" id="PF01513">
    <property type="entry name" value="NAD_kinase"/>
    <property type="match status" value="1"/>
</dbReference>
<dbReference type="Pfam" id="PF20143">
    <property type="entry name" value="NAD_kinase_C"/>
    <property type="match status" value="1"/>
</dbReference>
<dbReference type="SUPFAM" id="SSF111331">
    <property type="entry name" value="NAD kinase/diacylglycerol kinase-like"/>
    <property type="match status" value="1"/>
</dbReference>
<feature type="chain" id="PRO_0000229695" description="NAD kinase">
    <location>
        <begin position="1"/>
        <end position="279"/>
    </location>
</feature>
<feature type="active site" description="Proton acceptor" evidence="1">
    <location>
        <position position="57"/>
    </location>
</feature>
<feature type="binding site" evidence="1">
    <location>
        <begin position="57"/>
        <end position="58"/>
    </location>
    <ligand>
        <name>NAD(+)</name>
        <dbReference type="ChEBI" id="CHEBI:57540"/>
    </ligand>
</feature>
<feature type="binding site" evidence="1">
    <location>
        <begin position="133"/>
        <end position="134"/>
    </location>
    <ligand>
        <name>NAD(+)</name>
        <dbReference type="ChEBI" id="CHEBI:57540"/>
    </ligand>
</feature>
<feature type="binding site" evidence="1">
    <location>
        <position position="159"/>
    </location>
    <ligand>
        <name>NAD(+)</name>
        <dbReference type="ChEBI" id="CHEBI:57540"/>
    </ligand>
</feature>
<feature type="binding site" evidence="1">
    <location>
        <position position="161"/>
    </location>
    <ligand>
        <name>NAD(+)</name>
        <dbReference type="ChEBI" id="CHEBI:57540"/>
    </ligand>
</feature>
<feature type="binding site" evidence="1">
    <location>
        <begin position="172"/>
        <end position="177"/>
    </location>
    <ligand>
        <name>NAD(+)</name>
        <dbReference type="ChEBI" id="CHEBI:57540"/>
    </ligand>
</feature>
<protein>
    <recommendedName>
        <fullName evidence="1">NAD kinase</fullName>
        <ecNumber evidence="1">2.7.1.23</ecNumber>
    </recommendedName>
    <alternativeName>
        <fullName evidence="1">ATP-dependent NAD kinase</fullName>
    </alternativeName>
</protein>
<organism>
    <name type="scientific">Streptococcus pyogenes serotype M28 (strain MGAS6180)</name>
    <dbReference type="NCBI Taxonomy" id="319701"/>
    <lineage>
        <taxon>Bacteria</taxon>
        <taxon>Bacillati</taxon>
        <taxon>Bacillota</taxon>
        <taxon>Bacilli</taxon>
        <taxon>Lactobacillales</taxon>
        <taxon>Streptococcaceae</taxon>
        <taxon>Streptococcus</taxon>
    </lineage>
</organism>
<name>NADK_STRPM</name>
<comment type="function">
    <text evidence="1">Involved in the regulation of the intracellular balance of NAD and NADP, and is a key enzyme in the biosynthesis of NADP. Catalyzes specifically the phosphorylation on 2'-hydroxyl of the adenosine moiety of NAD to yield NADP.</text>
</comment>
<comment type="catalytic activity">
    <reaction evidence="1">
        <text>NAD(+) + ATP = ADP + NADP(+) + H(+)</text>
        <dbReference type="Rhea" id="RHEA:18629"/>
        <dbReference type="ChEBI" id="CHEBI:15378"/>
        <dbReference type="ChEBI" id="CHEBI:30616"/>
        <dbReference type="ChEBI" id="CHEBI:57540"/>
        <dbReference type="ChEBI" id="CHEBI:58349"/>
        <dbReference type="ChEBI" id="CHEBI:456216"/>
        <dbReference type="EC" id="2.7.1.23"/>
    </reaction>
</comment>
<comment type="cofactor">
    <cofactor evidence="1">
        <name>a divalent metal cation</name>
        <dbReference type="ChEBI" id="CHEBI:60240"/>
    </cofactor>
</comment>
<comment type="subcellular location">
    <subcellularLocation>
        <location evidence="1">Cytoplasm</location>
    </subcellularLocation>
</comment>
<comment type="similarity">
    <text evidence="1">Belongs to the NAD kinase family.</text>
</comment>